<gene>
    <name type="primary">ZHD8</name>
    <name type="ordered locus">Os04g0434500</name>
    <name type="ordered locus">LOC_Os04g35500</name>
    <name type="ORF">OSJNBa0088K19.15</name>
    <name type="ORF">OSJNBb0086G13.8</name>
</gene>
<feature type="chain" id="PRO_0000426046" description="Zinc-finger homeodomain protein 8">
    <location>
        <begin position="1"/>
        <end position="283"/>
    </location>
</feature>
<feature type="zinc finger region" description="ZF-HD dimerization-type; degenerate" evidence="2">
    <location>
        <begin position="23"/>
        <end position="68"/>
    </location>
</feature>
<feature type="DNA-binding region" description="Homeobox">
    <location>
        <begin position="163"/>
        <end position="226"/>
    </location>
</feature>
<feature type="region of interest" description="Disordered" evidence="3">
    <location>
        <begin position="131"/>
        <end position="171"/>
    </location>
</feature>
<feature type="region of interest" description="Disordered" evidence="3">
    <location>
        <begin position="244"/>
        <end position="283"/>
    </location>
</feature>
<feature type="compositionally biased region" description="Gly residues" evidence="3">
    <location>
        <begin position="148"/>
        <end position="161"/>
    </location>
</feature>
<feature type="compositionally biased region" description="Gly residues" evidence="3">
    <location>
        <begin position="244"/>
        <end position="256"/>
    </location>
</feature>
<feature type="compositionally biased region" description="Acidic residues" evidence="3">
    <location>
        <begin position="257"/>
        <end position="266"/>
    </location>
</feature>
<feature type="compositionally biased region" description="Low complexity" evidence="3">
    <location>
        <begin position="269"/>
        <end position="283"/>
    </location>
</feature>
<feature type="site" description="Required for DNA-binding" evidence="1">
    <location>
        <position position="215"/>
    </location>
</feature>
<comment type="function">
    <text evidence="1">Putative transcription factor.</text>
</comment>
<comment type="subunit">
    <text evidence="1">Homo- and heterodimer with other ZFHD proteins.</text>
</comment>
<comment type="subcellular location">
    <subcellularLocation>
        <location evidence="1">Nucleus</location>
    </subcellularLocation>
</comment>
<comment type="domain">
    <text>The homeodomain differs form the typical one by having namely 4 instead of 3 extra amino acids inserted in the loop between helix 1 and helix 2.</text>
</comment>
<name>ZHD8_ORYSJ</name>
<organism>
    <name type="scientific">Oryza sativa subsp. japonica</name>
    <name type="common">Rice</name>
    <dbReference type="NCBI Taxonomy" id="39947"/>
    <lineage>
        <taxon>Eukaryota</taxon>
        <taxon>Viridiplantae</taxon>
        <taxon>Streptophyta</taxon>
        <taxon>Embryophyta</taxon>
        <taxon>Tracheophyta</taxon>
        <taxon>Spermatophyta</taxon>
        <taxon>Magnoliopsida</taxon>
        <taxon>Liliopsida</taxon>
        <taxon>Poales</taxon>
        <taxon>Poaceae</taxon>
        <taxon>BOP clade</taxon>
        <taxon>Oryzoideae</taxon>
        <taxon>Oryzeae</taxon>
        <taxon>Oryzinae</taxon>
        <taxon>Oryza</taxon>
        <taxon>Oryza sativa</taxon>
    </lineage>
</organism>
<protein>
    <recommendedName>
        <fullName>Zinc-finger homeodomain protein 8</fullName>
        <shortName>OsZHD8</shortName>
    </recommendedName>
</protein>
<keyword id="KW-0238">DNA-binding</keyword>
<keyword id="KW-0371">Homeobox</keyword>
<keyword id="KW-0479">Metal-binding</keyword>
<keyword id="KW-0539">Nucleus</keyword>
<keyword id="KW-1185">Reference proteome</keyword>
<keyword id="KW-0804">Transcription</keyword>
<keyword id="KW-0805">Transcription regulation</keyword>
<keyword id="KW-0862">Zinc</keyword>
<keyword id="KW-0863">Zinc-finger</keyword>
<sequence length="283" mass="28912">MDHLSLVPYEGGSAGGGGGGGKYKECMRNHAAAMGGQAFDGCGEYMPASPDSLKCAACGCHRSFHRRAAAGIGGGPVFFRPPPPPQPHSHHAALQGFLPSSVPAPAPPPQLALPYHAVPAAAWHHAAAAAAGRAGSETPPRMDDFGPGSAGGSGSGGGGIFGRKRFRTKFTPEQKERMREFAEKQGWRINRNDDGALDRFCVEIGVKRHVLKVWMHNHKNQLASSPTSAAAAAAGVMNPGAGIGLGTGLGTGISGDGDGDDDDTDDSPPRAAVSSPSPSPISV</sequence>
<dbReference type="EMBL" id="AL606626">
    <property type="protein sequence ID" value="CAE03213.2"/>
    <property type="molecule type" value="Genomic_DNA"/>
</dbReference>
<dbReference type="EMBL" id="AL606706">
    <property type="protein sequence ID" value="CAE01709.1"/>
    <property type="molecule type" value="Genomic_DNA"/>
</dbReference>
<dbReference type="EMBL" id="AP008210">
    <property type="protein sequence ID" value="BAF14756.1"/>
    <property type="molecule type" value="Genomic_DNA"/>
</dbReference>
<dbReference type="EMBL" id="AP014960">
    <property type="status" value="NOT_ANNOTATED_CDS"/>
    <property type="molecule type" value="Genomic_DNA"/>
</dbReference>
<dbReference type="SMR" id="Q7X7N3"/>
<dbReference type="FunCoup" id="Q7X7N3">
    <property type="interactions" value="15"/>
</dbReference>
<dbReference type="STRING" id="39947.Q7X7N3"/>
<dbReference type="PaxDb" id="39947-Q7X7N3"/>
<dbReference type="KEGG" id="dosa:Os04g0434500"/>
<dbReference type="eggNOG" id="ENOG502SNDM">
    <property type="taxonomic scope" value="Eukaryota"/>
</dbReference>
<dbReference type="HOGENOM" id="CLU_039237_4_0_1"/>
<dbReference type="InParanoid" id="Q7X7N3"/>
<dbReference type="OMA" id="HKTHLAS"/>
<dbReference type="Proteomes" id="UP000000763">
    <property type="component" value="Chromosome 4"/>
</dbReference>
<dbReference type="Proteomes" id="UP000059680">
    <property type="component" value="Chromosome 4"/>
</dbReference>
<dbReference type="GO" id="GO:0005634">
    <property type="term" value="C:nucleus"/>
    <property type="evidence" value="ECO:0000318"/>
    <property type="project" value="GO_Central"/>
</dbReference>
<dbReference type="GO" id="GO:0003700">
    <property type="term" value="F:DNA-binding transcription factor activity"/>
    <property type="evidence" value="ECO:0000318"/>
    <property type="project" value="GO_Central"/>
</dbReference>
<dbReference type="GO" id="GO:0000976">
    <property type="term" value="F:transcription cis-regulatory region binding"/>
    <property type="evidence" value="ECO:0000318"/>
    <property type="project" value="GO_Central"/>
</dbReference>
<dbReference type="GO" id="GO:0008270">
    <property type="term" value="F:zinc ion binding"/>
    <property type="evidence" value="ECO:0007669"/>
    <property type="project" value="UniProtKB-KW"/>
</dbReference>
<dbReference type="GO" id="GO:0006355">
    <property type="term" value="P:regulation of DNA-templated transcription"/>
    <property type="evidence" value="ECO:0000318"/>
    <property type="project" value="GO_Central"/>
</dbReference>
<dbReference type="FunFam" id="1.10.10.60:FF:000257">
    <property type="entry name" value="Zinc-finger homeodomain protein 2"/>
    <property type="match status" value="1"/>
</dbReference>
<dbReference type="Gene3D" id="1.10.10.60">
    <property type="entry name" value="Homeodomain-like"/>
    <property type="match status" value="1"/>
</dbReference>
<dbReference type="InterPro" id="IPR009057">
    <property type="entry name" value="Homeodomain-like_sf"/>
</dbReference>
<dbReference type="InterPro" id="IPR006455">
    <property type="entry name" value="Homeodomain_ZF_HD"/>
</dbReference>
<dbReference type="InterPro" id="IPR006456">
    <property type="entry name" value="ZF_HD_homeobox_Cys/His_dimer"/>
</dbReference>
<dbReference type="NCBIfam" id="TIGR01565">
    <property type="entry name" value="homeo_ZF_HD"/>
    <property type="match status" value="1"/>
</dbReference>
<dbReference type="NCBIfam" id="TIGR01566">
    <property type="entry name" value="ZF_HD_prot_N"/>
    <property type="match status" value="1"/>
</dbReference>
<dbReference type="PANTHER" id="PTHR31948">
    <property type="entry name" value="ZINC-FINGER HOMEODOMAIN PROTEIN 2"/>
    <property type="match status" value="1"/>
</dbReference>
<dbReference type="PANTHER" id="PTHR31948:SF128">
    <property type="entry name" value="ZINC-FINGER HOMEODOMAIN PROTEIN 8"/>
    <property type="match status" value="1"/>
</dbReference>
<dbReference type="Pfam" id="PF04770">
    <property type="entry name" value="ZF-HD_dimer"/>
    <property type="match status" value="1"/>
</dbReference>
<dbReference type="SUPFAM" id="SSF46689">
    <property type="entry name" value="Homeodomain-like"/>
    <property type="match status" value="1"/>
</dbReference>
<dbReference type="PROSITE" id="PS51523">
    <property type="entry name" value="ZF_HD_DIMER"/>
    <property type="match status" value="1"/>
</dbReference>
<evidence type="ECO:0000250" key="1"/>
<evidence type="ECO:0000255" key="2">
    <source>
        <dbReference type="PROSITE-ProRule" id="PRU00856"/>
    </source>
</evidence>
<evidence type="ECO:0000256" key="3">
    <source>
        <dbReference type="SAM" id="MobiDB-lite"/>
    </source>
</evidence>
<accession>Q7X7N3</accession>
<reference key="1">
    <citation type="journal article" date="2002" name="Nature">
        <title>Sequence and analysis of rice chromosome 4.</title>
        <authorList>
            <person name="Feng Q."/>
            <person name="Zhang Y."/>
            <person name="Hao P."/>
            <person name="Wang S."/>
            <person name="Fu G."/>
            <person name="Huang Y."/>
            <person name="Li Y."/>
            <person name="Zhu J."/>
            <person name="Liu Y."/>
            <person name="Hu X."/>
            <person name="Jia P."/>
            <person name="Zhang Y."/>
            <person name="Zhao Q."/>
            <person name="Ying K."/>
            <person name="Yu S."/>
            <person name="Tang Y."/>
            <person name="Weng Q."/>
            <person name="Zhang L."/>
            <person name="Lu Y."/>
            <person name="Mu J."/>
            <person name="Lu Y."/>
            <person name="Zhang L.S."/>
            <person name="Yu Z."/>
            <person name="Fan D."/>
            <person name="Liu X."/>
            <person name="Lu T."/>
            <person name="Li C."/>
            <person name="Wu Y."/>
            <person name="Sun T."/>
            <person name="Lei H."/>
            <person name="Li T."/>
            <person name="Hu H."/>
            <person name="Guan J."/>
            <person name="Wu M."/>
            <person name="Zhang R."/>
            <person name="Zhou B."/>
            <person name="Chen Z."/>
            <person name="Chen L."/>
            <person name="Jin Z."/>
            <person name="Wang R."/>
            <person name="Yin H."/>
            <person name="Cai Z."/>
            <person name="Ren S."/>
            <person name="Lv G."/>
            <person name="Gu W."/>
            <person name="Zhu G."/>
            <person name="Tu Y."/>
            <person name="Jia J."/>
            <person name="Zhang Y."/>
            <person name="Chen J."/>
            <person name="Kang H."/>
            <person name="Chen X."/>
            <person name="Shao C."/>
            <person name="Sun Y."/>
            <person name="Hu Q."/>
            <person name="Zhang X."/>
            <person name="Zhang W."/>
            <person name="Wang L."/>
            <person name="Ding C."/>
            <person name="Sheng H."/>
            <person name="Gu J."/>
            <person name="Chen S."/>
            <person name="Ni L."/>
            <person name="Zhu F."/>
            <person name="Chen W."/>
            <person name="Lan L."/>
            <person name="Lai Y."/>
            <person name="Cheng Z."/>
            <person name="Gu M."/>
            <person name="Jiang J."/>
            <person name="Li J."/>
            <person name="Hong G."/>
            <person name="Xue Y."/>
            <person name="Han B."/>
        </authorList>
    </citation>
    <scope>NUCLEOTIDE SEQUENCE [LARGE SCALE GENOMIC DNA]</scope>
    <source>
        <strain>cv. Nipponbare</strain>
    </source>
</reference>
<reference key="2">
    <citation type="journal article" date="2005" name="Nature">
        <title>The map-based sequence of the rice genome.</title>
        <authorList>
            <consortium name="International rice genome sequencing project (IRGSP)"/>
        </authorList>
    </citation>
    <scope>NUCLEOTIDE SEQUENCE [LARGE SCALE GENOMIC DNA]</scope>
    <source>
        <strain>cv. Nipponbare</strain>
    </source>
</reference>
<reference key="3">
    <citation type="journal article" date="2008" name="Nucleic Acids Res.">
        <title>The rice annotation project database (RAP-DB): 2008 update.</title>
        <authorList>
            <consortium name="The rice annotation project (RAP)"/>
        </authorList>
    </citation>
    <scope>GENOME REANNOTATION</scope>
    <source>
        <strain>cv. Nipponbare</strain>
    </source>
</reference>
<reference key="4">
    <citation type="journal article" date="2013" name="Rice">
        <title>Improvement of the Oryza sativa Nipponbare reference genome using next generation sequence and optical map data.</title>
        <authorList>
            <person name="Kawahara Y."/>
            <person name="de la Bastide M."/>
            <person name="Hamilton J.P."/>
            <person name="Kanamori H."/>
            <person name="McCombie W.R."/>
            <person name="Ouyang S."/>
            <person name="Schwartz D.C."/>
            <person name="Tanaka T."/>
            <person name="Wu J."/>
            <person name="Zhou S."/>
            <person name="Childs K.L."/>
            <person name="Davidson R.M."/>
            <person name="Lin H."/>
            <person name="Quesada-Ocampo L."/>
            <person name="Vaillancourt B."/>
            <person name="Sakai H."/>
            <person name="Lee S.S."/>
            <person name="Kim J."/>
            <person name="Numa H."/>
            <person name="Itoh T."/>
            <person name="Buell C.R."/>
            <person name="Matsumoto T."/>
        </authorList>
    </citation>
    <scope>GENOME REANNOTATION</scope>
    <source>
        <strain>cv. Nipponbare</strain>
    </source>
</reference>
<reference key="5">
    <citation type="journal article" date="2008" name="J. Integr. Plant Biol.">
        <title>Phylogenetic analysis of the plant-specific zinc finger-homeobox and mini zinc finger gene families.</title>
        <authorList>
            <person name="Hu W."/>
            <person name="dePamphilis C.W."/>
            <person name="Ma H."/>
        </authorList>
    </citation>
    <scope>GENE FAMILY</scope>
    <scope>NOMENCLATURE</scope>
</reference>
<proteinExistence type="inferred from homology"/>